<organism>
    <name type="scientific">Desulfurococcus amylolyticus (strain DSM 18924 / JCM 16383 / VKM B-2413 / 1221n)</name>
    <name type="common">Desulfurococcus kamchatkensis</name>
    <dbReference type="NCBI Taxonomy" id="490899"/>
    <lineage>
        <taxon>Archaea</taxon>
        <taxon>Thermoproteota</taxon>
        <taxon>Thermoprotei</taxon>
        <taxon>Desulfurococcales</taxon>
        <taxon>Desulfurococcaceae</taxon>
        <taxon>Desulfurococcus</taxon>
    </lineage>
</organism>
<sequence>MILSDWDIRVYIEKKLLIIDPLFDDTVRENGVDLRFGDEFCRFKRENSVVDTSRDGVDNVLECYRVRGDGFVINPLEHVLTTTLEYVEFPHDLVGLVNLRSTFARFGLYIPPTVIDAGFKGNITIELVGSTVPVKVYPGQRFLHLILARTSSPVYKPYTGKYQGQRGVTPPKLDNSSSKNF</sequence>
<accession>B8D5T1</accession>
<comment type="function">
    <text evidence="1">Catalyzes the deamination of dCTP to dUTP.</text>
</comment>
<comment type="catalytic activity">
    <reaction evidence="1">
        <text>dCTP + H2O + H(+) = dUTP + NH4(+)</text>
        <dbReference type="Rhea" id="RHEA:22680"/>
        <dbReference type="ChEBI" id="CHEBI:15377"/>
        <dbReference type="ChEBI" id="CHEBI:15378"/>
        <dbReference type="ChEBI" id="CHEBI:28938"/>
        <dbReference type="ChEBI" id="CHEBI:61481"/>
        <dbReference type="ChEBI" id="CHEBI:61555"/>
        <dbReference type="EC" id="3.5.4.13"/>
    </reaction>
</comment>
<comment type="pathway">
    <text evidence="1">Pyrimidine metabolism; dUMP biosynthesis; dUMP from dCTP (dUTP route): step 1/2.</text>
</comment>
<comment type="subunit">
    <text evidence="1">Homotrimer.</text>
</comment>
<comment type="similarity">
    <text evidence="1">Belongs to the dCTP deaminase family.</text>
</comment>
<reference key="1">
    <citation type="journal article" date="2009" name="J. Bacteriol.">
        <title>Complete genome sequence of the anaerobic, protein-degrading hyperthermophilic crenarchaeon Desulfurococcus kamchatkensis.</title>
        <authorList>
            <person name="Ravin N.V."/>
            <person name="Mardanov A.V."/>
            <person name="Beletsky A.V."/>
            <person name="Kublanov I.V."/>
            <person name="Kolganova T.V."/>
            <person name="Lebedinsky A.V."/>
            <person name="Chernyh N.A."/>
            <person name="Bonch-Osmolovskaya E.A."/>
            <person name="Skryabin K.G."/>
        </authorList>
    </citation>
    <scope>NUCLEOTIDE SEQUENCE [LARGE SCALE GENOMIC DNA]</scope>
    <source>
        <strain>DSM 18924 / JCM 16383 / VKM B-2413 / 1221n</strain>
    </source>
</reference>
<proteinExistence type="inferred from homology"/>
<keyword id="KW-0378">Hydrolase</keyword>
<keyword id="KW-0546">Nucleotide metabolism</keyword>
<keyword id="KW-0547">Nucleotide-binding</keyword>
<protein>
    <recommendedName>
        <fullName evidence="1">dCTP deaminase</fullName>
        <ecNumber evidence="1">3.5.4.13</ecNumber>
    </recommendedName>
    <alternativeName>
        <fullName evidence="1">Deoxycytidine triphosphate deaminase</fullName>
    </alternativeName>
</protein>
<gene>
    <name evidence="1" type="primary">dcd</name>
    <name type="ordered locus">DKAM_1136</name>
</gene>
<name>DCD_DESA1</name>
<dbReference type="EC" id="3.5.4.13" evidence="1"/>
<dbReference type="EMBL" id="CP001140">
    <property type="protein sequence ID" value="ACL11462.1"/>
    <property type="molecule type" value="Genomic_DNA"/>
</dbReference>
<dbReference type="RefSeq" id="WP_012608803.1">
    <property type="nucleotide sequence ID" value="NC_011766.1"/>
</dbReference>
<dbReference type="SMR" id="B8D5T1"/>
<dbReference type="STRING" id="490899.DKAM_1136"/>
<dbReference type="GeneID" id="7171228"/>
<dbReference type="KEGG" id="dka:DKAM_1136"/>
<dbReference type="eggNOG" id="arCOG04048">
    <property type="taxonomic scope" value="Archaea"/>
</dbReference>
<dbReference type="HOGENOM" id="CLU_087476_3_0_2"/>
<dbReference type="UniPathway" id="UPA00610">
    <property type="reaction ID" value="UER00665"/>
</dbReference>
<dbReference type="Proteomes" id="UP000006903">
    <property type="component" value="Chromosome"/>
</dbReference>
<dbReference type="GO" id="GO:0008829">
    <property type="term" value="F:dCTP deaminase activity"/>
    <property type="evidence" value="ECO:0007669"/>
    <property type="project" value="UniProtKB-UniRule"/>
</dbReference>
<dbReference type="GO" id="GO:0000166">
    <property type="term" value="F:nucleotide binding"/>
    <property type="evidence" value="ECO:0007669"/>
    <property type="project" value="UniProtKB-KW"/>
</dbReference>
<dbReference type="GO" id="GO:0006226">
    <property type="term" value="P:dUMP biosynthetic process"/>
    <property type="evidence" value="ECO:0007669"/>
    <property type="project" value="UniProtKB-UniPathway"/>
</dbReference>
<dbReference type="GO" id="GO:0006229">
    <property type="term" value="P:dUTP biosynthetic process"/>
    <property type="evidence" value="ECO:0007669"/>
    <property type="project" value="UniProtKB-UniRule"/>
</dbReference>
<dbReference type="CDD" id="cd07557">
    <property type="entry name" value="trimeric_dUTPase"/>
    <property type="match status" value="1"/>
</dbReference>
<dbReference type="Gene3D" id="2.70.40.10">
    <property type="match status" value="1"/>
</dbReference>
<dbReference type="HAMAP" id="MF_00146">
    <property type="entry name" value="dCTP_deaminase"/>
    <property type="match status" value="1"/>
</dbReference>
<dbReference type="InterPro" id="IPR011962">
    <property type="entry name" value="dCTP_deaminase"/>
</dbReference>
<dbReference type="InterPro" id="IPR036157">
    <property type="entry name" value="dUTPase-like_sf"/>
</dbReference>
<dbReference type="InterPro" id="IPR033704">
    <property type="entry name" value="dUTPase_trimeric"/>
</dbReference>
<dbReference type="NCBIfam" id="TIGR02274">
    <property type="entry name" value="dCTP_deam"/>
    <property type="match status" value="1"/>
</dbReference>
<dbReference type="PANTHER" id="PTHR42680">
    <property type="entry name" value="DCTP DEAMINASE"/>
    <property type="match status" value="1"/>
</dbReference>
<dbReference type="PANTHER" id="PTHR42680:SF3">
    <property type="entry name" value="DCTP DEAMINASE"/>
    <property type="match status" value="1"/>
</dbReference>
<dbReference type="Pfam" id="PF22769">
    <property type="entry name" value="DCD"/>
    <property type="match status" value="1"/>
</dbReference>
<dbReference type="SUPFAM" id="SSF51283">
    <property type="entry name" value="dUTPase-like"/>
    <property type="match status" value="1"/>
</dbReference>
<feature type="chain" id="PRO_1000123142" description="dCTP deaminase">
    <location>
        <begin position="1"/>
        <end position="181"/>
    </location>
</feature>
<feature type="region of interest" description="Disordered" evidence="2">
    <location>
        <begin position="160"/>
        <end position="181"/>
    </location>
</feature>
<feature type="active site" description="Proton donor/acceptor" evidence="1">
    <location>
        <position position="126"/>
    </location>
</feature>
<feature type="binding site" evidence="1">
    <location>
        <begin position="100"/>
        <end position="105"/>
    </location>
    <ligand>
        <name>dCTP</name>
        <dbReference type="ChEBI" id="CHEBI:61481"/>
    </ligand>
</feature>
<feature type="binding site" evidence="1">
    <location>
        <position position="116"/>
    </location>
    <ligand>
        <name>dCTP</name>
        <dbReference type="ChEBI" id="CHEBI:61481"/>
    </ligand>
</feature>
<feature type="binding site" evidence="1">
    <location>
        <position position="158"/>
    </location>
    <ligand>
        <name>dCTP</name>
        <dbReference type="ChEBI" id="CHEBI:61481"/>
    </ligand>
</feature>
<feature type="binding site" evidence="1">
    <location>
        <position position="165"/>
    </location>
    <ligand>
        <name>dCTP</name>
        <dbReference type="ChEBI" id="CHEBI:61481"/>
    </ligand>
</feature>
<evidence type="ECO:0000255" key="1">
    <source>
        <dbReference type="HAMAP-Rule" id="MF_00146"/>
    </source>
</evidence>
<evidence type="ECO:0000256" key="2">
    <source>
        <dbReference type="SAM" id="MobiDB-lite"/>
    </source>
</evidence>